<dbReference type="EMBL" id="X06464">
    <property type="protein sequence ID" value="CAA29772.1"/>
    <property type="molecule type" value="Genomic_RNA"/>
</dbReference>
<dbReference type="EMBL" id="M21844">
    <property type="protein sequence ID" value="AAA42844.1"/>
    <property type="molecule type" value="Genomic_RNA"/>
</dbReference>
<dbReference type="PIR" id="S03654">
    <property type="entry name" value="P2XRAU"/>
</dbReference>
<dbReference type="SMR" id="P12434"/>
<dbReference type="GO" id="GO:0039625">
    <property type="term" value="C:viral inner capsid"/>
    <property type="evidence" value="ECO:0007669"/>
    <property type="project" value="UniProtKB-KW"/>
</dbReference>
<dbReference type="GO" id="GO:0005198">
    <property type="term" value="F:structural molecule activity"/>
    <property type="evidence" value="ECO:0007669"/>
    <property type="project" value="InterPro"/>
</dbReference>
<dbReference type="GO" id="GO:0075512">
    <property type="term" value="P:clathrin-dependent endocytosis of virus by host cell"/>
    <property type="evidence" value="ECO:0007669"/>
    <property type="project" value="UniProtKB-KW"/>
</dbReference>
<dbReference type="GO" id="GO:0019062">
    <property type="term" value="P:virion attachment to host cell"/>
    <property type="evidence" value="ECO:0007669"/>
    <property type="project" value="UniProtKB-KW"/>
</dbReference>
<dbReference type="InterPro" id="IPR001742">
    <property type="entry name" value="Capsid_VP2_Orbivir"/>
</dbReference>
<dbReference type="Pfam" id="PF00898">
    <property type="entry name" value="Orbi_VP2"/>
    <property type="match status" value="1"/>
</dbReference>
<proteinExistence type="inferred from homology"/>
<gene>
    <name type="primary">Segment-2</name>
</gene>
<reference key="1">
    <citation type="journal article" date="1988" name="Nucleic Acids Res.">
        <title>Complete sequence of VP2 gene of the bluetongue virus serotype 1 (BTV-1).</title>
        <authorList>
            <person name="Yamaguchi S."/>
            <person name="Fukusho A."/>
            <person name="Roy P."/>
        </authorList>
    </citation>
    <scope>NUCLEOTIDE SEQUENCE [GENOMIC RNA]</scope>
</reference>
<reference key="2">
    <citation type="submission" date="1988-02" db="EMBL/GenBank/DDBJ databases">
        <authorList>
            <person name="Marshall J."/>
        </authorList>
    </citation>
    <scope>SEQUENCE REVISION</scope>
</reference>
<reference key="3">
    <citation type="journal article" date="1988" name="Virus Res.">
        <title>Conserved and non-conserved regions of the outer coat protein, VP2, of the Australian bluetongue serotype 1 virus, revealed by sequence comparison to the VP2 of North American BTV serotype 10.</title>
        <authorList>
            <person name="Gould A.R."/>
        </authorList>
    </citation>
    <scope>NUCLEOTIDE SEQUENCE [GENOMIC RNA]</scope>
</reference>
<evidence type="ECO:0000250" key="1"/>
<evidence type="ECO:0000305" key="2"/>
<comment type="function">
    <text evidence="1">The VP2 protein is one of the two proteins (with VP5) which constitute the virus particle outer capsid. It is the major target of the host immunogenic response. Responsible for viral attachment to target host cell, probably by binding to sialic acid. This attachment induces virion internalization predominantly through clathrin-dependent endocytosis (By similarity).</text>
</comment>
<comment type="subcellular location">
    <subcellularLocation>
        <location evidence="2">Virion</location>
    </subcellularLocation>
</comment>
<comment type="similarity">
    <text evidence="2">Belongs to the orbivirus VP2 family.</text>
</comment>
<protein>
    <recommendedName>
        <fullName>Outer capsid protein VP2</fullName>
    </recommendedName>
</protein>
<sequence>MDELGIPIYKRGFPEHLLHGYEFTIDSSTKIQSVGGRHDVTKLPEMNAYDIKSEGMRTALWYNPVRNDGFVLPRVLDITLRGYDGKRAVIDSSRHKSFHTDERWVQWMMKDSMDAQPLKVGLDDQTQKIAHSLHNCVVKIDSKKADTMSYHIEPIEDSLKGCLHTRTMLWNHLVRVEMSHAAQEIAYALKPTYDIVVHAERRDRSQPFRPGDQTLINFSRGQKVQMNHNSYEKMVEGLAHLVIRGKTPELIRDEITKLDEICNRWIRSRYDPGEIKAYELCKVLSTVGRKMLDQEKEPADEANLSIRFQEAIDNKFRQHDSERLKIFEHRNQRRDEDRFYILLMIAASDTFNTRVWWSNPYPCLRGTLIASETKLGDVYSMMRLWYDWSVRPTYIPYEKSREQEKYIYGRVNLFDYVAEPGTKIIHWEYKLNQQIKDITYEQGNPCDLFPDDDEAIVTKFDDVAYGQMVNDLINGGWDQERFKMHKILKSQGNVLTIDFEKDAKLTSNEGVAMPEYFDKWIIAPMFNAKLRIKHGEIAQRRNDDPMVKRTLSPIAFAPIVLQRLTLARFYDIRPAIMGQALSRQQGQSTYDEEISKIEGYAEILQRRGIVQIPKKPCPTVTAQYTLERYALFLINILEQHIIQSTDEDVMYSHPRVDYKLEVHGENIIDISQIVIFVFDFLFERRRTVRGVYESRYMVTRIRDAQGQNRINVITEFFPTFGYHLSRVKEATIIQEIMYLNFLPLFFLVSDNIIYTHKQWSVPLFLYAHELKVIPLEVGSYNDRCSLVSYIEYMVFFPSKAFRTSKLDEVQPKIAREMLKYYINTKIFEGGINLNVVTTKQLLYETYLASICGGLSDGIVWYLPITHPNKCLVAIEVSDERVPASIRASHIKLRFPLSVKHLKGIVIIQVDEEGKFTVYSEGIVSHRVCKKNLLKYMCDIVLLKFSGHVFGNDEMLTKLLNV</sequence>
<name>VP2_BTV1A</name>
<organismHost>
    <name type="scientific">Antilocapra americana</name>
    <name type="common">Pronghorn</name>
    <dbReference type="NCBI Taxonomy" id="9891"/>
</organismHost>
<organismHost>
    <name type="scientific">Bos taurus</name>
    <name type="common">Bovine</name>
    <dbReference type="NCBI Taxonomy" id="9913"/>
</organismHost>
<organismHost>
    <name type="scientific">Capra hircus</name>
    <name type="common">Goat</name>
    <dbReference type="NCBI Taxonomy" id="9925"/>
</organismHost>
<organismHost>
    <name type="scientific">Culicoides variipennis</name>
    <name type="common">Biting midge</name>
    <dbReference type="NCBI Taxonomy" id="46212"/>
</organismHost>
<organismHost>
    <name type="scientific">Ovis aries</name>
    <name type="common">Sheep</name>
    <dbReference type="NCBI Taxonomy" id="9940"/>
</organismHost>
<keyword id="KW-0167">Capsid protein</keyword>
<keyword id="KW-1165">Clathrin-mediated endocytosis of virus by host</keyword>
<keyword id="KW-0945">Host-virus interaction</keyword>
<keyword id="KW-1153">Inner capsid protein</keyword>
<keyword id="KW-1161">Viral attachment to host cell</keyword>
<keyword id="KW-1162">Viral penetration into host cytoplasm</keyword>
<keyword id="KW-0946">Virion</keyword>
<keyword id="KW-1164">Virus endocytosis by host</keyword>
<keyword id="KW-1160">Virus entry into host cell</keyword>
<feature type="chain" id="PRO_0000222680" description="Outer capsid protein VP2">
    <location>
        <begin position="1"/>
        <end position="961"/>
    </location>
</feature>
<feature type="sequence conflict" description="In Ref. 3; AAA42844." evidence="2" ref="3">
    <original>F</original>
    <variation>V</variation>
    <location>
        <position position="13"/>
    </location>
</feature>
<feature type="sequence conflict" description="In Ref. 3; AAA42844." evidence="2" ref="3">
    <original>L</original>
    <variation>V</variation>
    <location>
        <position position="72"/>
    </location>
</feature>
<feature type="sequence conflict" description="In Ref. 3; AAA42844." evidence="2" ref="3">
    <original>AYA</original>
    <variation>LTL</variation>
    <location>
        <begin position="186"/>
        <end position="188"/>
    </location>
</feature>
<feature type="sequence conflict" description="In Ref. 3; AAA42844." evidence="2" ref="3">
    <original>E</original>
    <variation>D</variation>
    <location>
        <position position="200"/>
    </location>
</feature>
<feature type="sequence conflict" description="In Ref. 3; AAA42844." evidence="2" ref="3">
    <original>A</original>
    <variation>D</variation>
    <location>
        <position position="557"/>
    </location>
</feature>
<feature type="sequence conflict" description="In Ref. 3; AAA42844." evidence="2" ref="3">
    <original>D</original>
    <variation>N</variation>
    <location>
        <position position="750"/>
    </location>
</feature>
<organism>
    <name type="scientific">Bluetongue virus 1 (isolate Australia)</name>
    <name type="common">BTV 1</name>
    <dbReference type="NCBI Taxonomy" id="10904"/>
    <lineage>
        <taxon>Viruses</taxon>
        <taxon>Riboviria</taxon>
        <taxon>Orthornavirae</taxon>
        <taxon>Duplornaviricota</taxon>
        <taxon>Resentoviricetes</taxon>
        <taxon>Reovirales</taxon>
        <taxon>Sedoreoviridae</taxon>
        <taxon>Orbivirus</taxon>
        <taxon>Bluetongue virus</taxon>
    </lineage>
</organism>
<accession>P12434</accession>